<name>PYRH_LEUMM</name>
<dbReference type="EC" id="2.7.4.22" evidence="1"/>
<dbReference type="EMBL" id="CP000414">
    <property type="protein sequence ID" value="ABJ62295.1"/>
    <property type="molecule type" value="Genomic_DNA"/>
</dbReference>
<dbReference type="RefSeq" id="WP_011679926.1">
    <property type="nucleotide sequence ID" value="NC_008531.1"/>
</dbReference>
<dbReference type="SMR" id="Q03WX7"/>
<dbReference type="EnsemblBacteria" id="ABJ62295">
    <property type="protein sequence ID" value="ABJ62295"/>
    <property type="gene ID" value="LEUM_1197"/>
</dbReference>
<dbReference type="GeneID" id="29575788"/>
<dbReference type="KEGG" id="lme:LEUM_1197"/>
<dbReference type="eggNOG" id="COG0528">
    <property type="taxonomic scope" value="Bacteria"/>
</dbReference>
<dbReference type="HOGENOM" id="CLU_033861_0_0_9"/>
<dbReference type="UniPathway" id="UPA00159">
    <property type="reaction ID" value="UER00275"/>
</dbReference>
<dbReference type="Proteomes" id="UP000000362">
    <property type="component" value="Chromosome"/>
</dbReference>
<dbReference type="GO" id="GO:0005737">
    <property type="term" value="C:cytoplasm"/>
    <property type="evidence" value="ECO:0007669"/>
    <property type="project" value="UniProtKB-SubCell"/>
</dbReference>
<dbReference type="GO" id="GO:0005524">
    <property type="term" value="F:ATP binding"/>
    <property type="evidence" value="ECO:0007669"/>
    <property type="project" value="UniProtKB-KW"/>
</dbReference>
<dbReference type="GO" id="GO:0033862">
    <property type="term" value="F:UMP kinase activity"/>
    <property type="evidence" value="ECO:0007669"/>
    <property type="project" value="UniProtKB-EC"/>
</dbReference>
<dbReference type="GO" id="GO:0044210">
    <property type="term" value="P:'de novo' CTP biosynthetic process"/>
    <property type="evidence" value="ECO:0007669"/>
    <property type="project" value="UniProtKB-UniRule"/>
</dbReference>
<dbReference type="GO" id="GO:0006225">
    <property type="term" value="P:UDP biosynthetic process"/>
    <property type="evidence" value="ECO:0007669"/>
    <property type="project" value="TreeGrafter"/>
</dbReference>
<dbReference type="CDD" id="cd04254">
    <property type="entry name" value="AAK_UMPK-PyrH-Ec"/>
    <property type="match status" value="1"/>
</dbReference>
<dbReference type="FunFam" id="3.40.1160.10:FF:000001">
    <property type="entry name" value="Uridylate kinase"/>
    <property type="match status" value="1"/>
</dbReference>
<dbReference type="Gene3D" id="3.40.1160.10">
    <property type="entry name" value="Acetylglutamate kinase-like"/>
    <property type="match status" value="1"/>
</dbReference>
<dbReference type="HAMAP" id="MF_01220_B">
    <property type="entry name" value="PyrH_B"/>
    <property type="match status" value="1"/>
</dbReference>
<dbReference type="InterPro" id="IPR036393">
    <property type="entry name" value="AceGlu_kinase-like_sf"/>
</dbReference>
<dbReference type="InterPro" id="IPR001048">
    <property type="entry name" value="Asp/Glu/Uridylate_kinase"/>
</dbReference>
<dbReference type="InterPro" id="IPR011817">
    <property type="entry name" value="Uridylate_kinase"/>
</dbReference>
<dbReference type="InterPro" id="IPR015963">
    <property type="entry name" value="Uridylate_kinase_bac"/>
</dbReference>
<dbReference type="NCBIfam" id="TIGR02075">
    <property type="entry name" value="pyrH_bact"/>
    <property type="match status" value="1"/>
</dbReference>
<dbReference type="PANTHER" id="PTHR42833">
    <property type="entry name" value="URIDYLATE KINASE"/>
    <property type="match status" value="1"/>
</dbReference>
<dbReference type="PANTHER" id="PTHR42833:SF4">
    <property type="entry name" value="URIDYLATE KINASE PUMPKIN, CHLOROPLASTIC"/>
    <property type="match status" value="1"/>
</dbReference>
<dbReference type="Pfam" id="PF00696">
    <property type="entry name" value="AA_kinase"/>
    <property type="match status" value="1"/>
</dbReference>
<dbReference type="PIRSF" id="PIRSF005650">
    <property type="entry name" value="Uridylate_kin"/>
    <property type="match status" value="1"/>
</dbReference>
<dbReference type="SUPFAM" id="SSF53633">
    <property type="entry name" value="Carbamate kinase-like"/>
    <property type="match status" value="1"/>
</dbReference>
<accession>Q03WX7</accession>
<gene>
    <name evidence="1" type="primary">pyrH</name>
    <name type="ordered locus">LEUM_1197</name>
</gene>
<proteinExistence type="inferred from homology"/>
<feature type="chain" id="PRO_1000053947" description="Uridylate kinase">
    <location>
        <begin position="1"/>
        <end position="241"/>
    </location>
</feature>
<feature type="region of interest" description="Involved in allosteric activation by GTP" evidence="1">
    <location>
        <begin position="20"/>
        <end position="25"/>
    </location>
</feature>
<feature type="binding site" evidence="1">
    <location>
        <begin position="12"/>
        <end position="15"/>
    </location>
    <ligand>
        <name>ATP</name>
        <dbReference type="ChEBI" id="CHEBI:30616"/>
    </ligand>
</feature>
<feature type="binding site" evidence="1">
    <location>
        <position position="54"/>
    </location>
    <ligand>
        <name>UMP</name>
        <dbReference type="ChEBI" id="CHEBI:57865"/>
    </ligand>
</feature>
<feature type="binding site" evidence="1">
    <location>
        <position position="55"/>
    </location>
    <ligand>
        <name>ATP</name>
        <dbReference type="ChEBI" id="CHEBI:30616"/>
    </ligand>
</feature>
<feature type="binding site" evidence="1">
    <location>
        <position position="59"/>
    </location>
    <ligand>
        <name>ATP</name>
        <dbReference type="ChEBI" id="CHEBI:30616"/>
    </ligand>
</feature>
<feature type="binding site" evidence="1">
    <location>
        <position position="74"/>
    </location>
    <ligand>
        <name>UMP</name>
        <dbReference type="ChEBI" id="CHEBI:57865"/>
    </ligand>
</feature>
<feature type="binding site" evidence="1">
    <location>
        <begin position="135"/>
        <end position="142"/>
    </location>
    <ligand>
        <name>UMP</name>
        <dbReference type="ChEBI" id="CHEBI:57865"/>
    </ligand>
</feature>
<feature type="binding site" evidence="1">
    <location>
        <position position="163"/>
    </location>
    <ligand>
        <name>ATP</name>
        <dbReference type="ChEBI" id="CHEBI:30616"/>
    </ligand>
</feature>
<feature type="binding site" evidence="1">
    <location>
        <position position="169"/>
    </location>
    <ligand>
        <name>ATP</name>
        <dbReference type="ChEBI" id="CHEBI:30616"/>
    </ligand>
</feature>
<feature type="binding site" evidence="1">
    <location>
        <position position="172"/>
    </location>
    <ligand>
        <name>ATP</name>
        <dbReference type="ChEBI" id="CHEBI:30616"/>
    </ligand>
</feature>
<reference key="1">
    <citation type="journal article" date="2006" name="Proc. Natl. Acad. Sci. U.S.A.">
        <title>Comparative genomics of the lactic acid bacteria.</title>
        <authorList>
            <person name="Makarova K.S."/>
            <person name="Slesarev A."/>
            <person name="Wolf Y.I."/>
            <person name="Sorokin A."/>
            <person name="Mirkin B."/>
            <person name="Koonin E.V."/>
            <person name="Pavlov A."/>
            <person name="Pavlova N."/>
            <person name="Karamychev V."/>
            <person name="Polouchine N."/>
            <person name="Shakhova V."/>
            <person name="Grigoriev I."/>
            <person name="Lou Y."/>
            <person name="Rohksar D."/>
            <person name="Lucas S."/>
            <person name="Huang K."/>
            <person name="Goodstein D.M."/>
            <person name="Hawkins T."/>
            <person name="Plengvidhya V."/>
            <person name="Welker D."/>
            <person name="Hughes J."/>
            <person name="Goh Y."/>
            <person name="Benson A."/>
            <person name="Baldwin K."/>
            <person name="Lee J.-H."/>
            <person name="Diaz-Muniz I."/>
            <person name="Dosti B."/>
            <person name="Smeianov V."/>
            <person name="Wechter W."/>
            <person name="Barabote R."/>
            <person name="Lorca G."/>
            <person name="Altermann E."/>
            <person name="Barrangou R."/>
            <person name="Ganesan B."/>
            <person name="Xie Y."/>
            <person name="Rawsthorne H."/>
            <person name="Tamir D."/>
            <person name="Parker C."/>
            <person name="Breidt F."/>
            <person name="Broadbent J.R."/>
            <person name="Hutkins R."/>
            <person name="O'Sullivan D."/>
            <person name="Steele J."/>
            <person name="Unlu G."/>
            <person name="Saier M.H. Jr."/>
            <person name="Klaenhammer T."/>
            <person name="Richardson P."/>
            <person name="Kozyavkin S."/>
            <person name="Weimer B.C."/>
            <person name="Mills D.A."/>
        </authorList>
    </citation>
    <scope>NUCLEOTIDE SEQUENCE [LARGE SCALE GENOMIC DNA]</scope>
    <source>
        <strain>ATCC 8293 / DSM 20343 / BCRC 11652 / CCM 1803 / JCM 6124 / NCDO 523 / NBRC 100496 / NCIMB 8023 / NCTC 12954 / NRRL B-1118 / 37Y</strain>
    </source>
</reference>
<keyword id="KW-0021">Allosteric enzyme</keyword>
<keyword id="KW-0067">ATP-binding</keyword>
<keyword id="KW-0963">Cytoplasm</keyword>
<keyword id="KW-0418">Kinase</keyword>
<keyword id="KW-0547">Nucleotide-binding</keyword>
<keyword id="KW-0665">Pyrimidine biosynthesis</keyword>
<keyword id="KW-1185">Reference proteome</keyword>
<keyword id="KW-0808">Transferase</keyword>
<protein>
    <recommendedName>
        <fullName evidence="1">Uridylate kinase</fullName>
        <shortName evidence="1">UK</shortName>
        <ecNumber evidence="1">2.7.4.22</ecNumber>
    </recommendedName>
    <alternativeName>
        <fullName evidence="1">Uridine monophosphate kinase</fullName>
        <shortName evidence="1">UMP kinase</shortName>
        <shortName evidence="1">UMPK</shortName>
    </alternativeName>
</protein>
<sequence length="241" mass="25837">MTDIKYKRVLMKLSGEALAGDKGQGIDLETVSAIAEELKDVHDLGTQIAIVVGGGNLWRGEPASKIGMERSRADYTGMLGTTMNALVLQDSLERAGVQTRVQTAITMQQIAEPYIRGRAIRHLEKGRIVIFAAGTGSPYFSTDTTAALRANEINADAILMGKNGVDGIYDSDPNKNANAVKFTELTHLDILQKGLKVMDSTASSLSMDNNMPLVVFNLNTPGNLKRVVLGEAIGTTVTGEK</sequence>
<evidence type="ECO:0000255" key="1">
    <source>
        <dbReference type="HAMAP-Rule" id="MF_01220"/>
    </source>
</evidence>
<comment type="function">
    <text evidence="1">Catalyzes the reversible phosphorylation of UMP to UDP.</text>
</comment>
<comment type="catalytic activity">
    <reaction evidence="1">
        <text>UMP + ATP = UDP + ADP</text>
        <dbReference type="Rhea" id="RHEA:24400"/>
        <dbReference type="ChEBI" id="CHEBI:30616"/>
        <dbReference type="ChEBI" id="CHEBI:57865"/>
        <dbReference type="ChEBI" id="CHEBI:58223"/>
        <dbReference type="ChEBI" id="CHEBI:456216"/>
        <dbReference type="EC" id="2.7.4.22"/>
    </reaction>
</comment>
<comment type="activity regulation">
    <text evidence="1">Allosterically activated by GTP. Inhibited by UTP.</text>
</comment>
<comment type="pathway">
    <text evidence="1">Pyrimidine metabolism; CTP biosynthesis via de novo pathway; UDP from UMP (UMPK route): step 1/1.</text>
</comment>
<comment type="subunit">
    <text evidence="1">Homohexamer.</text>
</comment>
<comment type="subcellular location">
    <subcellularLocation>
        <location evidence="1">Cytoplasm</location>
    </subcellularLocation>
</comment>
<comment type="similarity">
    <text evidence="1">Belongs to the UMP kinase family.</text>
</comment>
<organism>
    <name type="scientific">Leuconostoc mesenteroides subsp. mesenteroides (strain ATCC 8293 / DSM 20343 / BCRC 11652 / CCM 1803 / JCM 6124 / NCDO 523 / NBRC 100496 / NCIMB 8023 / NCTC 12954 / NRRL B-1118 / 37Y)</name>
    <dbReference type="NCBI Taxonomy" id="203120"/>
    <lineage>
        <taxon>Bacteria</taxon>
        <taxon>Bacillati</taxon>
        <taxon>Bacillota</taxon>
        <taxon>Bacilli</taxon>
        <taxon>Lactobacillales</taxon>
        <taxon>Lactobacillaceae</taxon>
        <taxon>Leuconostoc</taxon>
    </lineage>
</organism>